<gene>
    <name type="primary">yopM</name>
    <name type="ordered locus">BSU20840</name>
</gene>
<dbReference type="EMBL" id="AL009126">
    <property type="protein sequence ID" value="CAB13976.1"/>
    <property type="molecule type" value="Genomic_DNA"/>
</dbReference>
<dbReference type="RefSeq" id="NP_389966.1">
    <property type="nucleotide sequence ID" value="NC_000964.3"/>
</dbReference>
<dbReference type="RefSeq" id="WP_004399418.1">
    <property type="nucleotide sequence ID" value="NZ_OZ025638.1"/>
</dbReference>
<dbReference type="SMR" id="O34605"/>
<dbReference type="FunCoup" id="O34605">
    <property type="interactions" value="2"/>
</dbReference>
<dbReference type="STRING" id="224308.BSU20840"/>
<dbReference type="jPOST" id="O34605"/>
<dbReference type="PaxDb" id="224308-BSU20840"/>
<dbReference type="EnsemblBacteria" id="CAB13976">
    <property type="protein sequence ID" value="CAB13976"/>
    <property type="gene ID" value="BSU_20840"/>
</dbReference>
<dbReference type="GeneID" id="939186"/>
<dbReference type="KEGG" id="bsu:BSU20840"/>
<dbReference type="PATRIC" id="fig|224308.179.peg.2274"/>
<dbReference type="InParanoid" id="O34605"/>
<dbReference type="OrthoDB" id="2910801at2"/>
<dbReference type="BioCyc" id="BSUB:BSU20840-MONOMER"/>
<dbReference type="Proteomes" id="UP000001570">
    <property type="component" value="Chromosome"/>
</dbReference>
<sequence length="66" mass="7905">MSAISYLKNSMTMHKTIYQKKVESLVKNDLFFHEKSIEKSKIMKNENVRKQLTKGYMKLLSEYKED</sequence>
<organism>
    <name type="scientific">Bacillus subtilis (strain 168)</name>
    <dbReference type="NCBI Taxonomy" id="224308"/>
    <lineage>
        <taxon>Bacteria</taxon>
        <taxon>Bacillati</taxon>
        <taxon>Bacillota</taxon>
        <taxon>Bacilli</taxon>
        <taxon>Bacillales</taxon>
        <taxon>Bacillaceae</taxon>
        <taxon>Bacillus</taxon>
    </lineage>
</organism>
<protein>
    <recommendedName>
        <fullName>SPbeta prophage-derived uncharacterized protein YopM</fullName>
    </recommendedName>
</protein>
<proteinExistence type="predicted"/>
<name>YOPM_BACSU</name>
<accession>O34605</accession>
<reference key="1">
    <citation type="journal article" date="1997" name="Nature">
        <title>The complete genome sequence of the Gram-positive bacterium Bacillus subtilis.</title>
        <authorList>
            <person name="Kunst F."/>
            <person name="Ogasawara N."/>
            <person name="Moszer I."/>
            <person name="Albertini A.M."/>
            <person name="Alloni G."/>
            <person name="Azevedo V."/>
            <person name="Bertero M.G."/>
            <person name="Bessieres P."/>
            <person name="Bolotin A."/>
            <person name="Borchert S."/>
            <person name="Borriss R."/>
            <person name="Boursier L."/>
            <person name="Brans A."/>
            <person name="Braun M."/>
            <person name="Brignell S.C."/>
            <person name="Bron S."/>
            <person name="Brouillet S."/>
            <person name="Bruschi C.V."/>
            <person name="Caldwell B."/>
            <person name="Capuano V."/>
            <person name="Carter N.M."/>
            <person name="Choi S.-K."/>
            <person name="Codani J.-J."/>
            <person name="Connerton I.F."/>
            <person name="Cummings N.J."/>
            <person name="Daniel R.A."/>
            <person name="Denizot F."/>
            <person name="Devine K.M."/>
            <person name="Duesterhoeft A."/>
            <person name="Ehrlich S.D."/>
            <person name="Emmerson P.T."/>
            <person name="Entian K.-D."/>
            <person name="Errington J."/>
            <person name="Fabret C."/>
            <person name="Ferrari E."/>
            <person name="Foulger D."/>
            <person name="Fritz C."/>
            <person name="Fujita M."/>
            <person name="Fujita Y."/>
            <person name="Fuma S."/>
            <person name="Galizzi A."/>
            <person name="Galleron N."/>
            <person name="Ghim S.-Y."/>
            <person name="Glaser P."/>
            <person name="Goffeau A."/>
            <person name="Golightly E.J."/>
            <person name="Grandi G."/>
            <person name="Guiseppi G."/>
            <person name="Guy B.J."/>
            <person name="Haga K."/>
            <person name="Haiech J."/>
            <person name="Harwood C.R."/>
            <person name="Henaut A."/>
            <person name="Hilbert H."/>
            <person name="Holsappel S."/>
            <person name="Hosono S."/>
            <person name="Hullo M.-F."/>
            <person name="Itaya M."/>
            <person name="Jones L.-M."/>
            <person name="Joris B."/>
            <person name="Karamata D."/>
            <person name="Kasahara Y."/>
            <person name="Klaerr-Blanchard M."/>
            <person name="Klein C."/>
            <person name="Kobayashi Y."/>
            <person name="Koetter P."/>
            <person name="Koningstein G."/>
            <person name="Krogh S."/>
            <person name="Kumano M."/>
            <person name="Kurita K."/>
            <person name="Lapidus A."/>
            <person name="Lardinois S."/>
            <person name="Lauber J."/>
            <person name="Lazarevic V."/>
            <person name="Lee S.-M."/>
            <person name="Levine A."/>
            <person name="Liu H."/>
            <person name="Masuda S."/>
            <person name="Mauel C."/>
            <person name="Medigue C."/>
            <person name="Medina N."/>
            <person name="Mellado R.P."/>
            <person name="Mizuno M."/>
            <person name="Moestl D."/>
            <person name="Nakai S."/>
            <person name="Noback M."/>
            <person name="Noone D."/>
            <person name="O'Reilly M."/>
            <person name="Ogawa K."/>
            <person name="Ogiwara A."/>
            <person name="Oudega B."/>
            <person name="Park S.-H."/>
            <person name="Parro V."/>
            <person name="Pohl T.M."/>
            <person name="Portetelle D."/>
            <person name="Porwollik S."/>
            <person name="Prescott A.M."/>
            <person name="Presecan E."/>
            <person name="Pujic P."/>
            <person name="Purnelle B."/>
            <person name="Rapoport G."/>
            <person name="Rey M."/>
            <person name="Reynolds S."/>
            <person name="Rieger M."/>
            <person name="Rivolta C."/>
            <person name="Rocha E."/>
            <person name="Roche B."/>
            <person name="Rose M."/>
            <person name="Sadaie Y."/>
            <person name="Sato T."/>
            <person name="Scanlan E."/>
            <person name="Schleich S."/>
            <person name="Schroeter R."/>
            <person name="Scoffone F."/>
            <person name="Sekiguchi J."/>
            <person name="Sekowska A."/>
            <person name="Seror S.J."/>
            <person name="Serror P."/>
            <person name="Shin B.-S."/>
            <person name="Soldo B."/>
            <person name="Sorokin A."/>
            <person name="Tacconi E."/>
            <person name="Takagi T."/>
            <person name="Takahashi H."/>
            <person name="Takemaru K."/>
            <person name="Takeuchi M."/>
            <person name="Tamakoshi A."/>
            <person name="Tanaka T."/>
            <person name="Terpstra P."/>
            <person name="Tognoni A."/>
            <person name="Tosato V."/>
            <person name="Uchiyama S."/>
            <person name="Vandenbol M."/>
            <person name="Vannier F."/>
            <person name="Vassarotti A."/>
            <person name="Viari A."/>
            <person name="Wambutt R."/>
            <person name="Wedler E."/>
            <person name="Wedler H."/>
            <person name="Weitzenegger T."/>
            <person name="Winters P."/>
            <person name="Wipat A."/>
            <person name="Yamamoto H."/>
            <person name="Yamane K."/>
            <person name="Yasumoto K."/>
            <person name="Yata K."/>
            <person name="Yoshida K."/>
            <person name="Yoshikawa H.-F."/>
            <person name="Zumstein E."/>
            <person name="Yoshikawa H."/>
            <person name="Danchin A."/>
        </authorList>
    </citation>
    <scope>NUCLEOTIDE SEQUENCE [LARGE SCALE GENOMIC DNA]</scope>
    <source>
        <strain>168</strain>
    </source>
</reference>
<feature type="chain" id="PRO_0000372593" description="SPbeta prophage-derived uncharacterized protein YopM">
    <location>
        <begin position="1"/>
        <end position="66"/>
    </location>
</feature>
<keyword id="KW-1185">Reference proteome</keyword>